<gene>
    <name type="primary">Tox3</name>
    <name type="synonym">Tnrc9</name>
</gene>
<evidence type="ECO:0000250" key="1"/>
<evidence type="ECO:0000255" key="2">
    <source>
        <dbReference type="PROSITE-ProRule" id="PRU00267"/>
    </source>
</evidence>
<evidence type="ECO:0000256" key="3">
    <source>
        <dbReference type="SAM" id="MobiDB-lite"/>
    </source>
</evidence>
<evidence type="ECO:0000305" key="4"/>
<feature type="chain" id="PRO_0000286354" description="TOX high mobility group box family member 3">
    <location>
        <begin position="1"/>
        <end position="575"/>
    </location>
</feature>
<feature type="DNA-binding region" description="HMG box" evidence="2">
    <location>
        <begin position="254"/>
        <end position="322"/>
    </location>
</feature>
<feature type="region of interest" description="Disordered" evidence="3">
    <location>
        <begin position="189"/>
        <end position="258"/>
    </location>
</feature>
<feature type="region of interest" description="Disordered" evidence="3">
    <location>
        <begin position="516"/>
        <end position="575"/>
    </location>
</feature>
<feature type="compositionally biased region" description="Low complexity" evidence="3">
    <location>
        <begin position="195"/>
        <end position="214"/>
    </location>
</feature>
<feature type="compositionally biased region" description="Basic and acidic residues" evidence="3">
    <location>
        <begin position="222"/>
        <end position="238"/>
    </location>
</feature>
<feature type="compositionally biased region" description="Basic residues" evidence="3">
    <location>
        <begin position="239"/>
        <end position="249"/>
    </location>
</feature>
<feature type="compositionally biased region" description="Low complexity" evidence="3">
    <location>
        <begin position="516"/>
        <end position="526"/>
    </location>
</feature>
<feature type="compositionally biased region" description="Polar residues" evidence="3">
    <location>
        <begin position="527"/>
        <end position="541"/>
    </location>
</feature>
<feature type="compositionally biased region" description="Low complexity" evidence="3">
    <location>
        <begin position="548"/>
        <end position="575"/>
    </location>
</feature>
<feature type="sequence conflict" description="In Ref. 1; BAC38545." evidence="4" ref="1">
    <original>A</original>
    <variation>G</variation>
    <location>
        <position position="10"/>
    </location>
</feature>
<feature type="sequence conflict" description="In Ref. 1; BAC38545." evidence="4" ref="1">
    <original>A</original>
    <variation>S</variation>
    <location>
        <position position="14"/>
    </location>
</feature>
<comment type="function">
    <text evidence="1">Transcriptional coactivator of the p300/CBP-mediated transcription complex. Activates transactivation through cAMP response element (CRE) sites. Protects against cell death by inducing antiapoptotic and repressing pro-apoptotic transcripts. Stimulates transcription from the estrogen-responsive or BCL-2 promoters. Required for depolarization-induced transcription activation of the C-FOS promoter in neurons. Associates with chromatin to the estrogen-responsive C3 promoter region (By similarity).</text>
</comment>
<comment type="subunit">
    <text evidence="1">Homodimer. Interacts (via HGM box) with CITED1 (via C-terminus); the interaction increases estrogen-response element (ERE)-dependent transcription and protection against cell death. Interacts with CREB1 (phosphorylated form). Interacts with CREB1; the interaction is not depolarization dependent. Interacts with CREBBP (via C-terminus) (By similarity).</text>
</comment>
<comment type="interaction">
    <interactant intactId="EBI-26675915">
        <id>Q80W03</id>
    </interactant>
    <interactant intactId="EBI-26675998">
        <id>Q8VHS6</id>
        <label>Asb15</label>
    </interactant>
    <organismsDiffer>false</organismsDiffer>
    <experiments>2</experiments>
</comment>
<comment type="subcellular location">
    <subcellularLocation>
        <location evidence="4">Nucleus</location>
    </subcellularLocation>
</comment>
<comment type="domain">
    <text evidence="1">The C-terminus is required for calcium responsiveness but not for transactivation activity.</text>
</comment>
<comment type="domain">
    <text evidence="1">The N-terminus is absolutely necessary for transactivation activity.</text>
</comment>
<proteinExistence type="evidence at protein level"/>
<name>TOX3_MOUSE</name>
<accession>Q80W03</accession>
<accession>Q8BIV8</accession>
<dbReference type="EMBL" id="AK082602">
    <property type="protein sequence ID" value="BAC38545.1"/>
    <property type="molecule type" value="mRNA"/>
</dbReference>
<dbReference type="EMBL" id="BC052044">
    <property type="protein sequence ID" value="AAH52044.1"/>
    <property type="molecule type" value="mRNA"/>
</dbReference>
<dbReference type="CCDS" id="CCDS22516.1"/>
<dbReference type="RefSeq" id="NP_766501.2">
    <property type="nucleotide sequence ID" value="NM_172913.4"/>
</dbReference>
<dbReference type="SMR" id="Q80W03"/>
<dbReference type="BioGRID" id="232663">
    <property type="interactions" value="9"/>
</dbReference>
<dbReference type="FunCoup" id="Q80W03">
    <property type="interactions" value="2305"/>
</dbReference>
<dbReference type="IntAct" id="Q80W03">
    <property type="interactions" value="8"/>
</dbReference>
<dbReference type="STRING" id="10090.ENSMUSP00000105250"/>
<dbReference type="GlyGen" id="Q80W03">
    <property type="glycosylation" value="2 sites"/>
</dbReference>
<dbReference type="iPTMnet" id="Q80W03"/>
<dbReference type="PhosphoSitePlus" id="Q80W03"/>
<dbReference type="PaxDb" id="10090-ENSMUSP00000105250"/>
<dbReference type="ProteomicsDB" id="258954"/>
<dbReference type="Antibodypedia" id="28333">
    <property type="antibodies" value="337 antibodies from 24 providers"/>
</dbReference>
<dbReference type="DNASU" id="244579"/>
<dbReference type="Ensembl" id="ENSMUST00000109621.10">
    <property type="protein sequence ID" value="ENSMUSP00000105250.4"/>
    <property type="gene ID" value="ENSMUSG00000043668.14"/>
</dbReference>
<dbReference type="GeneID" id="244579"/>
<dbReference type="KEGG" id="mmu:244579"/>
<dbReference type="UCSC" id="uc009msb.2">
    <property type="organism name" value="mouse"/>
</dbReference>
<dbReference type="AGR" id="MGI:3039593"/>
<dbReference type="CTD" id="27324"/>
<dbReference type="MGI" id="MGI:3039593">
    <property type="gene designation" value="Tox3"/>
</dbReference>
<dbReference type="VEuPathDB" id="HostDB:ENSMUSG00000043668"/>
<dbReference type="eggNOG" id="KOG0381">
    <property type="taxonomic scope" value="Eukaryota"/>
</dbReference>
<dbReference type="GeneTree" id="ENSGT00940000158043"/>
<dbReference type="HOGENOM" id="CLU_030650_1_0_1"/>
<dbReference type="InParanoid" id="Q80W03"/>
<dbReference type="OMA" id="AYSKFGN"/>
<dbReference type="OrthoDB" id="10027956at2759"/>
<dbReference type="PhylomeDB" id="Q80W03"/>
<dbReference type="TreeFam" id="TF106481"/>
<dbReference type="BioGRID-ORCS" id="244579">
    <property type="hits" value="3 hits in 79 CRISPR screens"/>
</dbReference>
<dbReference type="ChiTaRS" id="Tox3">
    <property type="organism name" value="mouse"/>
</dbReference>
<dbReference type="PRO" id="PR:Q80W03"/>
<dbReference type="Proteomes" id="UP000000589">
    <property type="component" value="Chromosome 8"/>
</dbReference>
<dbReference type="RNAct" id="Q80W03">
    <property type="molecule type" value="protein"/>
</dbReference>
<dbReference type="Bgee" id="ENSMUSG00000043668">
    <property type="expression patterns" value="Expressed in rostral migratory stream and 202 other cell types or tissues"/>
</dbReference>
<dbReference type="ExpressionAtlas" id="Q80W03">
    <property type="expression patterns" value="baseline and differential"/>
</dbReference>
<dbReference type="GO" id="GO:0005829">
    <property type="term" value="C:cytosol"/>
    <property type="evidence" value="ECO:0007669"/>
    <property type="project" value="Ensembl"/>
</dbReference>
<dbReference type="GO" id="GO:0005654">
    <property type="term" value="C:nucleoplasm"/>
    <property type="evidence" value="ECO:0007669"/>
    <property type="project" value="Ensembl"/>
</dbReference>
<dbReference type="GO" id="GO:0003682">
    <property type="term" value="F:chromatin binding"/>
    <property type="evidence" value="ECO:0000250"/>
    <property type="project" value="UniProtKB"/>
</dbReference>
<dbReference type="GO" id="GO:0003677">
    <property type="term" value="F:DNA binding"/>
    <property type="evidence" value="ECO:0007669"/>
    <property type="project" value="UniProtKB-KW"/>
</dbReference>
<dbReference type="GO" id="GO:0051219">
    <property type="term" value="F:phosphoprotein binding"/>
    <property type="evidence" value="ECO:0007669"/>
    <property type="project" value="Ensembl"/>
</dbReference>
<dbReference type="GO" id="GO:0042803">
    <property type="term" value="F:protein homodimerization activity"/>
    <property type="evidence" value="ECO:0000250"/>
    <property type="project" value="UniProtKB"/>
</dbReference>
<dbReference type="GO" id="GO:0003713">
    <property type="term" value="F:transcription coactivator activity"/>
    <property type="evidence" value="ECO:0007669"/>
    <property type="project" value="Ensembl"/>
</dbReference>
<dbReference type="GO" id="GO:0006915">
    <property type="term" value="P:apoptotic process"/>
    <property type="evidence" value="ECO:0007669"/>
    <property type="project" value="UniProtKB-KW"/>
</dbReference>
<dbReference type="GO" id="GO:0043524">
    <property type="term" value="P:negative regulation of neuron apoptotic process"/>
    <property type="evidence" value="ECO:0000250"/>
    <property type="project" value="UniProtKB"/>
</dbReference>
<dbReference type="GO" id="GO:0045944">
    <property type="term" value="P:positive regulation of transcription by RNA polymerase II"/>
    <property type="evidence" value="ECO:0000250"/>
    <property type="project" value="UniProtKB"/>
</dbReference>
<dbReference type="GO" id="GO:0042981">
    <property type="term" value="P:regulation of apoptotic process"/>
    <property type="evidence" value="ECO:0000250"/>
    <property type="project" value="UniProtKB"/>
</dbReference>
<dbReference type="CDD" id="cd21995">
    <property type="entry name" value="HMG-box_TOX-like"/>
    <property type="match status" value="1"/>
</dbReference>
<dbReference type="FunFam" id="1.10.30.10:FF:000005">
    <property type="entry name" value="TOX high mobility group box family member 3"/>
    <property type="match status" value="1"/>
</dbReference>
<dbReference type="Gene3D" id="1.10.30.10">
    <property type="entry name" value="High mobility group box domain"/>
    <property type="match status" value="1"/>
</dbReference>
<dbReference type="InterPro" id="IPR009071">
    <property type="entry name" value="HMG_box_dom"/>
</dbReference>
<dbReference type="InterPro" id="IPR036910">
    <property type="entry name" value="HMG_box_dom_sf"/>
</dbReference>
<dbReference type="InterPro" id="IPR051365">
    <property type="entry name" value="TOX_HMG-box_domain"/>
</dbReference>
<dbReference type="PANTHER" id="PTHR45781">
    <property type="entry name" value="AGAP000281-PA"/>
    <property type="match status" value="1"/>
</dbReference>
<dbReference type="PANTHER" id="PTHR45781:SF3">
    <property type="entry name" value="TOX HIGH MOBILITY GROUP BOX FAMILY MEMBER 3"/>
    <property type="match status" value="1"/>
</dbReference>
<dbReference type="Pfam" id="PF00505">
    <property type="entry name" value="HMG_box"/>
    <property type="match status" value="1"/>
</dbReference>
<dbReference type="PRINTS" id="PR00886">
    <property type="entry name" value="HIGHMOBLTY12"/>
</dbReference>
<dbReference type="SMART" id="SM00398">
    <property type="entry name" value="HMG"/>
    <property type="match status" value="1"/>
</dbReference>
<dbReference type="SUPFAM" id="SSF47095">
    <property type="entry name" value="HMG-box"/>
    <property type="match status" value="1"/>
</dbReference>
<dbReference type="PROSITE" id="PS50118">
    <property type="entry name" value="HMG_BOX_2"/>
    <property type="match status" value="1"/>
</dbReference>
<keyword id="KW-0010">Activator</keyword>
<keyword id="KW-0053">Apoptosis</keyword>
<keyword id="KW-0238">DNA-binding</keyword>
<keyword id="KW-0539">Nucleus</keyword>
<keyword id="KW-1185">Reference proteome</keyword>
<keyword id="KW-0804">Transcription</keyword>
<keyword id="KW-0805">Transcription regulation</keyword>
<protein>
    <recommendedName>
        <fullName>TOX high mobility group box family member 3</fullName>
    </recommendedName>
    <alternativeName>
        <fullName>Trinucleotide repeat-containing gene 9 protein</fullName>
    </alternativeName>
</protein>
<organism>
    <name type="scientific">Mus musculus</name>
    <name type="common">Mouse</name>
    <dbReference type="NCBI Taxonomy" id="10090"/>
    <lineage>
        <taxon>Eukaryota</taxon>
        <taxon>Metazoa</taxon>
        <taxon>Chordata</taxon>
        <taxon>Craniata</taxon>
        <taxon>Vertebrata</taxon>
        <taxon>Euteleostomi</taxon>
        <taxon>Mammalia</taxon>
        <taxon>Eutheria</taxon>
        <taxon>Euarchontoglires</taxon>
        <taxon>Glires</taxon>
        <taxon>Rodentia</taxon>
        <taxon>Myomorpha</taxon>
        <taxon>Muroidea</taxon>
        <taxon>Muridae</taxon>
        <taxon>Murinae</taxon>
        <taxon>Mus</taxon>
        <taxon>Mus</taxon>
    </lineage>
</organism>
<reference key="1">
    <citation type="journal article" date="2005" name="Science">
        <title>The transcriptional landscape of the mammalian genome.</title>
        <authorList>
            <person name="Carninci P."/>
            <person name="Kasukawa T."/>
            <person name="Katayama S."/>
            <person name="Gough J."/>
            <person name="Frith M.C."/>
            <person name="Maeda N."/>
            <person name="Oyama R."/>
            <person name="Ravasi T."/>
            <person name="Lenhard B."/>
            <person name="Wells C."/>
            <person name="Kodzius R."/>
            <person name="Shimokawa K."/>
            <person name="Bajic V.B."/>
            <person name="Brenner S.E."/>
            <person name="Batalov S."/>
            <person name="Forrest A.R."/>
            <person name="Zavolan M."/>
            <person name="Davis M.J."/>
            <person name="Wilming L.G."/>
            <person name="Aidinis V."/>
            <person name="Allen J.E."/>
            <person name="Ambesi-Impiombato A."/>
            <person name="Apweiler R."/>
            <person name="Aturaliya R.N."/>
            <person name="Bailey T.L."/>
            <person name="Bansal M."/>
            <person name="Baxter L."/>
            <person name="Beisel K.W."/>
            <person name="Bersano T."/>
            <person name="Bono H."/>
            <person name="Chalk A.M."/>
            <person name="Chiu K.P."/>
            <person name="Choudhary V."/>
            <person name="Christoffels A."/>
            <person name="Clutterbuck D.R."/>
            <person name="Crowe M.L."/>
            <person name="Dalla E."/>
            <person name="Dalrymple B.P."/>
            <person name="de Bono B."/>
            <person name="Della Gatta G."/>
            <person name="di Bernardo D."/>
            <person name="Down T."/>
            <person name="Engstrom P."/>
            <person name="Fagiolini M."/>
            <person name="Faulkner G."/>
            <person name="Fletcher C.F."/>
            <person name="Fukushima T."/>
            <person name="Furuno M."/>
            <person name="Futaki S."/>
            <person name="Gariboldi M."/>
            <person name="Georgii-Hemming P."/>
            <person name="Gingeras T.R."/>
            <person name="Gojobori T."/>
            <person name="Green R.E."/>
            <person name="Gustincich S."/>
            <person name="Harbers M."/>
            <person name="Hayashi Y."/>
            <person name="Hensch T.K."/>
            <person name="Hirokawa N."/>
            <person name="Hill D."/>
            <person name="Huminiecki L."/>
            <person name="Iacono M."/>
            <person name="Ikeo K."/>
            <person name="Iwama A."/>
            <person name="Ishikawa T."/>
            <person name="Jakt M."/>
            <person name="Kanapin A."/>
            <person name="Katoh M."/>
            <person name="Kawasawa Y."/>
            <person name="Kelso J."/>
            <person name="Kitamura H."/>
            <person name="Kitano H."/>
            <person name="Kollias G."/>
            <person name="Krishnan S.P."/>
            <person name="Kruger A."/>
            <person name="Kummerfeld S.K."/>
            <person name="Kurochkin I.V."/>
            <person name="Lareau L.F."/>
            <person name="Lazarevic D."/>
            <person name="Lipovich L."/>
            <person name="Liu J."/>
            <person name="Liuni S."/>
            <person name="McWilliam S."/>
            <person name="Madan Babu M."/>
            <person name="Madera M."/>
            <person name="Marchionni L."/>
            <person name="Matsuda H."/>
            <person name="Matsuzawa S."/>
            <person name="Miki H."/>
            <person name="Mignone F."/>
            <person name="Miyake S."/>
            <person name="Morris K."/>
            <person name="Mottagui-Tabar S."/>
            <person name="Mulder N."/>
            <person name="Nakano N."/>
            <person name="Nakauchi H."/>
            <person name="Ng P."/>
            <person name="Nilsson R."/>
            <person name="Nishiguchi S."/>
            <person name="Nishikawa S."/>
            <person name="Nori F."/>
            <person name="Ohara O."/>
            <person name="Okazaki Y."/>
            <person name="Orlando V."/>
            <person name="Pang K.C."/>
            <person name="Pavan W.J."/>
            <person name="Pavesi G."/>
            <person name="Pesole G."/>
            <person name="Petrovsky N."/>
            <person name="Piazza S."/>
            <person name="Reed J."/>
            <person name="Reid J.F."/>
            <person name="Ring B.Z."/>
            <person name="Ringwald M."/>
            <person name="Rost B."/>
            <person name="Ruan Y."/>
            <person name="Salzberg S.L."/>
            <person name="Sandelin A."/>
            <person name="Schneider C."/>
            <person name="Schoenbach C."/>
            <person name="Sekiguchi K."/>
            <person name="Semple C.A."/>
            <person name="Seno S."/>
            <person name="Sessa L."/>
            <person name="Sheng Y."/>
            <person name="Shibata Y."/>
            <person name="Shimada H."/>
            <person name="Shimada K."/>
            <person name="Silva D."/>
            <person name="Sinclair B."/>
            <person name="Sperling S."/>
            <person name="Stupka E."/>
            <person name="Sugiura K."/>
            <person name="Sultana R."/>
            <person name="Takenaka Y."/>
            <person name="Taki K."/>
            <person name="Tammoja K."/>
            <person name="Tan S.L."/>
            <person name="Tang S."/>
            <person name="Taylor M.S."/>
            <person name="Tegner J."/>
            <person name="Teichmann S.A."/>
            <person name="Ueda H.R."/>
            <person name="van Nimwegen E."/>
            <person name="Verardo R."/>
            <person name="Wei C.L."/>
            <person name="Yagi K."/>
            <person name="Yamanishi H."/>
            <person name="Zabarovsky E."/>
            <person name="Zhu S."/>
            <person name="Zimmer A."/>
            <person name="Hide W."/>
            <person name="Bult C."/>
            <person name="Grimmond S.M."/>
            <person name="Teasdale R.D."/>
            <person name="Liu E.T."/>
            <person name="Brusic V."/>
            <person name="Quackenbush J."/>
            <person name="Wahlestedt C."/>
            <person name="Mattick J.S."/>
            <person name="Hume D.A."/>
            <person name="Kai C."/>
            <person name="Sasaki D."/>
            <person name="Tomaru Y."/>
            <person name="Fukuda S."/>
            <person name="Kanamori-Katayama M."/>
            <person name="Suzuki M."/>
            <person name="Aoki J."/>
            <person name="Arakawa T."/>
            <person name="Iida J."/>
            <person name="Imamura K."/>
            <person name="Itoh M."/>
            <person name="Kato T."/>
            <person name="Kawaji H."/>
            <person name="Kawagashira N."/>
            <person name="Kawashima T."/>
            <person name="Kojima M."/>
            <person name="Kondo S."/>
            <person name="Konno H."/>
            <person name="Nakano K."/>
            <person name="Ninomiya N."/>
            <person name="Nishio T."/>
            <person name="Okada M."/>
            <person name="Plessy C."/>
            <person name="Shibata K."/>
            <person name="Shiraki T."/>
            <person name="Suzuki S."/>
            <person name="Tagami M."/>
            <person name="Waki K."/>
            <person name="Watahiki A."/>
            <person name="Okamura-Oho Y."/>
            <person name="Suzuki H."/>
            <person name="Kawai J."/>
            <person name="Hayashizaki Y."/>
        </authorList>
    </citation>
    <scope>NUCLEOTIDE SEQUENCE [LARGE SCALE MRNA]</scope>
    <source>
        <strain>C57BL/6J</strain>
        <tissue>Cerebellum</tissue>
    </source>
</reference>
<reference key="2">
    <citation type="journal article" date="2004" name="Genome Res.">
        <title>The status, quality, and expansion of the NIH full-length cDNA project: the Mammalian Gene Collection (MGC).</title>
        <authorList>
            <consortium name="The MGC Project Team"/>
        </authorList>
    </citation>
    <scope>NUCLEOTIDE SEQUENCE [LARGE SCALE MRNA]</scope>
    <source>
        <strain>C57BL/6J</strain>
        <tissue>Brain</tissue>
    </source>
</reference>
<sequence>MDVRFYPAAAGDPAGLDFAQCLGYYGYSKLGNNNYMNMAEANNAFFAASEQTFHTPSLGDEEFEIPPITPPPESDPTLGMPDALLPFQTLSDPLPSQGTEFTPQFPPQSLDLPSITISRNLVEQDGVLHSNGLHMDQSHTQVSQYRQDPSLVMRSIVHMTDGARSGIMPPAQLTTINQSQLSAQLGLNLGGANVSHTSPSPPASKSATPSPSSSINEEDADDANRAIGEKRTAPDSGKKPKTPKKKKKKDPNEPQKPVSAYALFFRDTQAAIKGQNPNATFGEVSKIVASMWDSLGEEQKQVYKRKTEAAKKEYLKALAAYRASLVSKAAAESAEAQTIRSVQQTLASTNLTSSLLLNTSLSQHGTVPASPQTLPQSLPRSIAPKPLTMRLPMSQIVTSVTIAANMPSNIGAPLISSMGTTMVGSATSTQVSPSVQTQQHQMQLQQQQQQQQQMQQMQQQQLQQHQMHQQIQQQMQQQHFQHHMQQHLQQQQQQHLQQQLSQQQLQQQLQQHLQLQQLQHMQHQSQPSPRQHSPVTSQITSPIPAIGSPQPASQQHQPQIQSQTQTQVLPQVSIF</sequence>